<comment type="function">
    <text evidence="5">Involved in detoxification of xenobiotics, and vacuolar sequestration of glutathione S-conjugates. Together with abc2, required for accumulation of a red pigment (ade pigment) in the vacuole of a mutant affected in the adenine biosynthetic pathway.</text>
</comment>
<comment type="catalytic activity">
    <reaction evidence="1">
        <text>ATP + H2O + xenobioticSide 1 = ADP + phosphate + xenobioticSide 2.</text>
        <dbReference type="EC" id="7.6.2.2"/>
    </reaction>
</comment>
<comment type="subcellular location">
    <subcellularLocation>
        <location evidence="2">Vacuole membrane</location>
        <topology evidence="4 5">Multi-pass membrane protein</topology>
    </subcellularLocation>
</comment>
<comment type="disruption phenotype">
    <text evidence="5">Cells lacking both abc2 and abc4 show sensitivity to cycloheximide (CHX) and 4-nitroquinoline oxide (4-NQO), and decreased accumulation of monochlorobimane-glutathione (MCIB-GS).</text>
</comment>
<comment type="similarity">
    <text evidence="6">Belongs to the ABC transporter superfamily. ABCC family. Conjugate transporter (TC 3.A.1.208) subfamily.</text>
</comment>
<feature type="chain" id="PRO_0000331223" description="ATP-binding cassette transporter abc4">
    <location>
        <begin position="1"/>
        <end position="1469"/>
    </location>
</feature>
<feature type="transmembrane region" description="Helical" evidence="4">
    <location>
        <begin position="21"/>
        <end position="40"/>
    </location>
</feature>
<feature type="transmembrane region" description="Helical" evidence="4">
    <location>
        <begin position="55"/>
        <end position="74"/>
    </location>
</feature>
<feature type="transmembrane region" description="Helical" evidence="4">
    <location>
        <begin position="94"/>
        <end position="114"/>
    </location>
</feature>
<feature type="transmembrane region" description="Helical" evidence="4">
    <location>
        <begin position="121"/>
        <end position="141"/>
    </location>
</feature>
<feature type="transmembrane region" description="Helical" evidence="4">
    <location>
        <begin position="160"/>
        <end position="180"/>
    </location>
</feature>
<feature type="transmembrane region" description="Helical" evidence="4">
    <location>
        <begin position="189"/>
        <end position="209"/>
    </location>
</feature>
<feature type="transmembrane region" description="Helical" evidence="4">
    <location>
        <begin position="296"/>
        <end position="316"/>
    </location>
</feature>
<feature type="transmembrane region" description="Helical" evidence="4">
    <location>
        <begin position="337"/>
        <end position="357"/>
    </location>
</feature>
<feature type="transmembrane region" description="Helical" evidence="4">
    <location>
        <begin position="412"/>
        <end position="432"/>
    </location>
</feature>
<feature type="transmembrane region" description="Helical" evidence="4">
    <location>
        <begin position="441"/>
        <end position="461"/>
    </location>
</feature>
<feature type="transmembrane region" description="Helical" evidence="4">
    <location>
        <begin position="524"/>
        <end position="544"/>
    </location>
</feature>
<feature type="transmembrane region" description="Helical" evidence="4">
    <location>
        <begin position="553"/>
        <end position="573"/>
    </location>
</feature>
<feature type="transmembrane region" description="Helical" evidence="4">
    <location>
        <begin position="894"/>
        <end position="914"/>
    </location>
</feature>
<feature type="transmembrane region" description="Helical" evidence="4">
    <location>
        <begin position="936"/>
        <end position="956"/>
    </location>
</feature>
<feature type="transmembrane region" description="Helical" evidence="4">
    <location>
        <begin position="1009"/>
        <end position="1029"/>
    </location>
</feature>
<feature type="transmembrane region" description="Helical" evidence="4">
    <location>
        <begin position="1033"/>
        <end position="1053"/>
    </location>
</feature>
<feature type="transmembrane region" description="Helical" evidence="4">
    <location>
        <begin position="1065"/>
        <end position="1085"/>
    </location>
</feature>
<feature type="transmembrane region" description="Helical" evidence="4">
    <location>
        <begin position="1120"/>
        <end position="1140"/>
    </location>
</feature>
<feature type="transmembrane region" description="Helical" evidence="4">
    <location>
        <begin position="1148"/>
        <end position="1168"/>
    </location>
</feature>
<feature type="domain" description="ABC transmembrane type-1 1" evidence="4">
    <location>
        <begin position="296"/>
        <end position="580"/>
    </location>
</feature>
<feature type="domain" description="ABC transporter 1" evidence="3">
    <location>
        <begin position="611"/>
        <end position="840"/>
    </location>
</feature>
<feature type="domain" description="ABC transmembrane type-1 2" evidence="4">
    <location>
        <begin position="897"/>
        <end position="1176"/>
    </location>
</feature>
<feature type="domain" description="ABC transporter 2" evidence="3">
    <location>
        <begin position="1214"/>
        <end position="1453"/>
    </location>
</feature>
<feature type="binding site" evidence="3">
    <location>
        <begin position="648"/>
        <end position="655"/>
    </location>
    <ligand>
        <name>ATP</name>
        <dbReference type="ChEBI" id="CHEBI:30616"/>
        <label>1</label>
    </ligand>
</feature>
<feature type="binding site" evidence="3">
    <location>
        <begin position="1246"/>
        <end position="1253"/>
    </location>
    <ligand>
        <name>ATP</name>
        <dbReference type="ChEBI" id="CHEBI:30616"/>
        <label>2</label>
    </ligand>
</feature>
<feature type="glycosylation site" description="N-linked (GlcNAc...) asparagine" evidence="2">
    <location>
        <position position="386"/>
    </location>
</feature>
<feature type="glycosylation site" description="N-linked (GlcNAc...) asparagine" evidence="2">
    <location>
        <position position="510"/>
    </location>
</feature>
<feature type="glycosylation site" description="N-linked (GlcNAc...) asparagine" evidence="2">
    <location>
        <position position="615"/>
    </location>
</feature>
<feature type="glycosylation site" description="N-linked (GlcNAc...) asparagine" evidence="2">
    <location>
        <position position="691"/>
    </location>
</feature>
<feature type="glycosylation site" description="N-linked (GlcNAc...) asparagine" evidence="2">
    <location>
        <position position="790"/>
    </location>
</feature>
<feature type="glycosylation site" description="N-linked (GlcNAc...) asparagine" evidence="2">
    <location>
        <position position="815"/>
    </location>
</feature>
<feature type="glycosylation site" description="N-linked (GlcNAc...) asparagine" evidence="2">
    <location>
        <position position="923"/>
    </location>
</feature>
<feature type="glycosylation site" description="N-linked (GlcNAc...) asparagine" evidence="2">
    <location>
        <position position="1007"/>
    </location>
</feature>
<feature type="glycosylation site" description="N-linked (GlcNAc...) asparagine" evidence="2">
    <location>
        <position position="1355"/>
    </location>
</feature>
<organism>
    <name type="scientific">Schizosaccharomyces pombe (strain 972 / ATCC 24843)</name>
    <name type="common">Fission yeast</name>
    <dbReference type="NCBI Taxonomy" id="284812"/>
    <lineage>
        <taxon>Eukaryota</taxon>
        <taxon>Fungi</taxon>
        <taxon>Dikarya</taxon>
        <taxon>Ascomycota</taxon>
        <taxon>Taphrinomycotina</taxon>
        <taxon>Schizosaccharomycetes</taxon>
        <taxon>Schizosaccharomycetales</taxon>
        <taxon>Schizosaccharomycetaceae</taxon>
        <taxon>Schizosaccharomyces</taxon>
    </lineage>
</organism>
<accession>Q9P7V2</accession>
<proteinExistence type="inferred from homology"/>
<reference evidence="7" key="1">
    <citation type="journal article" date="2002" name="Nature">
        <title>The genome sequence of Schizosaccharomyces pombe.</title>
        <authorList>
            <person name="Wood V."/>
            <person name="Gwilliam R."/>
            <person name="Rajandream M.A."/>
            <person name="Lyne M.H."/>
            <person name="Lyne R."/>
            <person name="Stewart A."/>
            <person name="Sgouros J.G."/>
            <person name="Peat N."/>
            <person name="Hayles J."/>
            <person name="Baker S.G."/>
            <person name="Basham D."/>
            <person name="Bowman S."/>
            <person name="Brooks K."/>
            <person name="Brown D."/>
            <person name="Brown S."/>
            <person name="Chillingworth T."/>
            <person name="Churcher C.M."/>
            <person name="Collins M."/>
            <person name="Connor R."/>
            <person name="Cronin A."/>
            <person name="Davis P."/>
            <person name="Feltwell T."/>
            <person name="Fraser A."/>
            <person name="Gentles S."/>
            <person name="Goble A."/>
            <person name="Hamlin N."/>
            <person name="Harris D.E."/>
            <person name="Hidalgo J."/>
            <person name="Hodgson G."/>
            <person name="Holroyd S."/>
            <person name="Hornsby T."/>
            <person name="Howarth S."/>
            <person name="Huckle E.J."/>
            <person name="Hunt S."/>
            <person name="Jagels K."/>
            <person name="James K.D."/>
            <person name="Jones L."/>
            <person name="Jones M."/>
            <person name="Leather S."/>
            <person name="McDonald S."/>
            <person name="McLean J."/>
            <person name="Mooney P."/>
            <person name="Moule S."/>
            <person name="Mungall K.L."/>
            <person name="Murphy L.D."/>
            <person name="Niblett D."/>
            <person name="Odell C."/>
            <person name="Oliver K."/>
            <person name="O'Neil S."/>
            <person name="Pearson D."/>
            <person name="Quail M.A."/>
            <person name="Rabbinowitsch E."/>
            <person name="Rutherford K.M."/>
            <person name="Rutter S."/>
            <person name="Saunders D."/>
            <person name="Seeger K."/>
            <person name="Sharp S."/>
            <person name="Skelton J."/>
            <person name="Simmonds M.N."/>
            <person name="Squares R."/>
            <person name="Squares S."/>
            <person name="Stevens K."/>
            <person name="Taylor K."/>
            <person name="Taylor R.G."/>
            <person name="Tivey A."/>
            <person name="Walsh S.V."/>
            <person name="Warren T."/>
            <person name="Whitehead S."/>
            <person name="Woodward J.R."/>
            <person name="Volckaert G."/>
            <person name="Aert R."/>
            <person name="Robben J."/>
            <person name="Grymonprez B."/>
            <person name="Weltjens I."/>
            <person name="Vanstreels E."/>
            <person name="Rieger M."/>
            <person name="Schaefer M."/>
            <person name="Mueller-Auer S."/>
            <person name="Gabel C."/>
            <person name="Fuchs M."/>
            <person name="Duesterhoeft A."/>
            <person name="Fritzc C."/>
            <person name="Holzer E."/>
            <person name="Moestl D."/>
            <person name="Hilbert H."/>
            <person name="Borzym K."/>
            <person name="Langer I."/>
            <person name="Beck A."/>
            <person name="Lehrach H."/>
            <person name="Reinhardt R."/>
            <person name="Pohl T.M."/>
            <person name="Eger P."/>
            <person name="Zimmermann W."/>
            <person name="Wedler H."/>
            <person name="Wambutt R."/>
            <person name="Purnelle B."/>
            <person name="Goffeau A."/>
            <person name="Cadieu E."/>
            <person name="Dreano S."/>
            <person name="Gloux S."/>
            <person name="Lelaure V."/>
            <person name="Mottier S."/>
            <person name="Galibert F."/>
            <person name="Aves S.J."/>
            <person name="Xiang Z."/>
            <person name="Hunt C."/>
            <person name="Moore K."/>
            <person name="Hurst S.M."/>
            <person name="Lucas M."/>
            <person name="Rochet M."/>
            <person name="Gaillardin C."/>
            <person name="Tallada V.A."/>
            <person name="Garzon A."/>
            <person name="Thode G."/>
            <person name="Daga R.R."/>
            <person name="Cruzado L."/>
            <person name="Jimenez J."/>
            <person name="Sanchez M."/>
            <person name="del Rey F."/>
            <person name="Benito J."/>
            <person name="Dominguez A."/>
            <person name="Revuelta J.L."/>
            <person name="Moreno S."/>
            <person name="Armstrong J."/>
            <person name="Forsburg S.L."/>
            <person name="Cerutti L."/>
            <person name="Lowe T."/>
            <person name="McCombie W.R."/>
            <person name="Paulsen I."/>
            <person name="Potashkin J."/>
            <person name="Shpakovski G.V."/>
            <person name="Ussery D."/>
            <person name="Barrell B.G."/>
            <person name="Nurse P."/>
        </authorList>
    </citation>
    <scope>NUCLEOTIDE SEQUENCE [LARGE SCALE GENOMIC DNA]</scope>
    <source>
        <strain>972 / ATCC 24843</strain>
    </source>
</reference>
<reference evidence="6" key="2">
    <citation type="journal article" date="2006" name="Microbiology">
        <title>A survey of all 11 ABC transporters in fission yeast: two novel ABC transporters are required for red pigment accumulation in a Schizosaccharomyces pombe adenine biosynthetic mutant.</title>
        <authorList>
            <person name="Iwaki T."/>
            <person name="Giga-Hama Y."/>
            <person name="Takegawa K."/>
        </authorList>
    </citation>
    <scope>FUNCTION</scope>
    <scope>SUBCELLULAR LOCATION</scope>
    <scope>DISRUPTION PHENOTYPE</scope>
</reference>
<name>ABC4_SCHPO</name>
<keyword id="KW-0067">ATP-binding</keyword>
<keyword id="KW-0216">Detoxification</keyword>
<keyword id="KW-0325">Glycoprotein</keyword>
<keyword id="KW-0472">Membrane</keyword>
<keyword id="KW-0547">Nucleotide-binding</keyword>
<keyword id="KW-1185">Reference proteome</keyword>
<keyword id="KW-0677">Repeat</keyword>
<keyword id="KW-1278">Translocase</keyword>
<keyword id="KW-0812">Transmembrane</keyword>
<keyword id="KW-1133">Transmembrane helix</keyword>
<keyword id="KW-0813">Transport</keyword>
<keyword id="KW-0926">Vacuole</keyword>
<gene>
    <name evidence="7" type="primary">abc4</name>
    <name type="ORF">SPAC30.04c</name>
</gene>
<sequence length="1469" mass="164790">MENFHHRPFKGGFGVGRVPTSLYYSLSDFSLSAISIFPTHYDQPYLNEAPSWYKYSLESGLVCLYLYLIYRWITRSFTVKQTVGSEFSGLRKAHGILLWLLSILFLGMTAFMFVNDAFPTAFSDPPVKICLLAYSVHLFLLHSLRMIYPRARPTLYHAAVLLNLLLLPPIFHFYSYPFFFVDHPPLSSYSPFLWFYFFITIVGNFIPLFTPRVWYPLFPEDNYQPSAEQVCSMFNFACSYGYLNPLVLTAKRRVVEVDDTPVIPDYDKNKAWTYRFERMKTPSLFITIHKIFWRQILGMGVSSFMVSVCQFLSPIALNRLLKHLESPSSSSVNPLVWIVLLLTGPFLTSLFTQFYLFMSTRYLARSYTTLVQQIYNKVIRSRFVQNKSGDSKVGRSNNLISTDVDDIGEIREFIHIIVRAPVEIAGSIYLLQKLLGWSAYVGLALTVLTCSVPIVLGPLVAKLTLRANRATDSRIELMSELLQSIRITKFFGWELPMLDRVKQRRQVELNRTWKLLLMEICIQVLVESLPVFSMFATFVVFTTIMGQTITPSIAFTSISLFSFIRTQFSWIAYLMRQIVQIFVSIGRVSDFLNDPDEVDPVNTIEDTSQEIGFFNASLTWVSNPSPGDFCLRDLNIVFPRNKLSIVIGPTGSGKSSLISALLGELSLNKGSYNLPRSKGVSYVSQVPWLRNATIRDNILFDYPYIEERYKKVIQACGLLTDLQSFVASDLTEIGEKGVTLSGGQKQRIALARAVYSPTSIVLMDDVFSALDIHTSNWIYKHCFQSSLMENRTVILVTHNVHLFMDSAAFIVTVKNGSAFPVTDKSSPLLFLAEQAASASEAAAPDLAAIPIPNEVDDAEAADEKDGKLVEEEQRVTGDVVFSEIFSYMKHFGSGFYVAAVLLFFVTTQATSILIDLWVAFWTNSSVNSPDVNNNKFLFVYGTMLLAYSLLDFLRTVSYDRGAWWASRKLHDSMLESVFGTFASWFDKTPTGRIVNRFAKDIRSIDMNLSGWLFFSINCFLSVAGGILSVSSAMPIFMIPAVIVCLAGYYFGLLYTRAQVGVKRLISIYTSPIFSLLGESIVGVSVIRAFNRQTIFKQMFSERLDNLVRLQSTSYNLNRWVAVRTDGISGLVGAIAGLIALLQKDLSPGVVGFSLNQAVIFSSSVLLFVRSCNSLQAEMNSYERVLEYSKLPQEPAPTIAGQVPATWPKEGDIVFNHVSVSYSAAGPTILKDVNLHINPSEKVAVVGRTGSGKSTLGLTLLRFTHRISGEIYINGRETQSVNLNALRQRISFIPQDPILFSGTVRSNLDPFDELEDNFLNEALKTSGASSMIMAHTDDQKPIHITLDTHVASEGSNFSQGQKQVLALARAIVRRSKIIILDECTASVDDAMDQKIQKTLREAFGDATMLCIAHRLKTIVDYDKVMVLDKGVLVEYGPPAVLYHNNGHFRRMCDGSGITFLPPETRGSKSA</sequence>
<protein>
    <recommendedName>
        <fullName>ATP-binding cassette transporter abc4</fullName>
        <shortName>ABC transporter abc4</shortName>
        <ecNumber>7.6.2.2</ecNumber>
    </recommendedName>
    <alternativeName>
        <fullName>ATP-energized glutathione S-conjugate pump abc4</fullName>
    </alternativeName>
    <alternativeName>
        <fullName>Glutathione S-conjugate-transporting ATPase abc4</fullName>
    </alternativeName>
</protein>
<evidence type="ECO:0000250" key="1">
    <source>
        <dbReference type="UniProtKB" id="Q9C8G9"/>
    </source>
</evidence>
<evidence type="ECO:0000255" key="2"/>
<evidence type="ECO:0000255" key="3">
    <source>
        <dbReference type="PROSITE-ProRule" id="PRU00434"/>
    </source>
</evidence>
<evidence type="ECO:0000255" key="4">
    <source>
        <dbReference type="PROSITE-ProRule" id="PRU00441"/>
    </source>
</evidence>
<evidence type="ECO:0000269" key="5">
    <source>
    </source>
</evidence>
<evidence type="ECO:0000305" key="6"/>
<evidence type="ECO:0000312" key="7">
    <source>
        <dbReference type="EMBL" id="CAB66463.1"/>
    </source>
</evidence>
<dbReference type="EC" id="7.6.2.2"/>
<dbReference type="EMBL" id="CU329670">
    <property type="protein sequence ID" value="CAB66463.1"/>
    <property type="molecule type" value="Genomic_DNA"/>
</dbReference>
<dbReference type="PIR" id="T50210">
    <property type="entry name" value="T50210"/>
</dbReference>
<dbReference type="RefSeq" id="NP_594558.1">
    <property type="nucleotide sequence ID" value="NM_001019987.2"/>
</dbReference>
<dbReference type="SMR" id="Q9P7V2"/>
<dbReference type="BioGRID" id="279493">
    <property type="interactions" value="8"/>
</dbReference>
<dbReference type="FunCoup" id="Q9P7V2">
    <property type="interactions" value="44"/>
</dbReference>
<dbReference type="STRING" id="284812.Q9P7V2"/>
<dbReference type="GlyCosmos" id="Q9P7V2">
    <property type="glycosylation" value="9 sites, No reported glycans"/>
</dbReference>
<dbReference type="iPTMnet" id="Q9P7V2"/>
<dbReference type="PaxDb" id="4896-SPAC30.04c.1"/>
<dbReference type="EnsemblFungi" id="SPAC30.04c.1">
    <property type="protein sequence ID" value="SPAC30.04c.1:pep"/>
    <property type="gene ID" value="SPAC30.04c"/>
</dbReference>
<dbReference type="GeneID" id="2543059"/>
<dbReference type="KEGG" id="spo:2543059"/>
<dbReference type="PomBase" id="SPAC30.04c">
    <property type="gene designation" value="abc4"/>
</dbReference>
<dbReference type="VEuPathDB" id="FungiDB:SPAC30.04c"/>
<dbReference type="eggNOG" id="KOG0054">
    <property type="taxonomic scope" value="Eukaryota"/>
</dbReference>
<dbReference type="HOGENOM" id="CLU_000604_27_6_1"/>
<dbReference type="InParanoid" id="Q9P7V2"/>
<dbReference type="OMA" id="CQQFGMK"/>
<dbReference type="PhylomeDB" id="Q9P7V2"/>
<dbReference type="Reactome" id="R-SPO-159418">
    <property type="pathway name" value="Recycling of bile acids and salts"/>
</dbReference>
<dbReference type="Reactome" id="R-SPO-1660661">
    <property type="pathway name" value="Sphingolipid de novo biosynthesis"/>
</dbReference>
<dbReference type="Reactome" id="R-SPO-189483">
    <property type="pathway name" value="Heme degradation"/>
</dbReference>
<dbReference type="Reactome" id="R-SPO-2142691">
    <property type="pathway name" value="Synthesis of Leukotrienes (LT) and Eoxins (EX)"/>
</dbReference>
<dbReference type="Reactome" id="R-SPO-382556">
    <property type="pathway name" value="ABC-family proteins mediated transport"/>
</dbReference>
<dbReference type="Reactome" id="R-SPO-9707564">
    <property type="pathway name" value="Cytoprotection by HMOX1"/>
</dbReference>
<dbReference type="Reactome" id="R-SPO-9749641">
    <property type="pathway name" value="Aspirin ADME"/>
</dbReference>
<dbReference type="Reactome" id="R-SPO-9753281">
    <property type="pathway name" value="Paracetamol ADME"/>
</dbReference>
<dbReference type="Reactome" id="R-SPO-9754706">
    <property type="pathway name" value="Atorvastatin ADME"/>
</dbReference>
<dbReference type="Reactome" id="R-SPO-9758890">
    <property type="pathway name" value="Transport of RCbl within the body"/>
</dbReference>
<dbReference type="PRO" id="PR:Q9P7V2"/>
<dbReference type="Proteomes" id="UP000002485">
    <property type="component" value="Chromosome I"/>
</dbReference>
<dbReference type="GO" id="GO:0000324">
    <property type="term" value="C:fungal-type vacuole"/>
    <property type="evidence" value="ECO:0000314"/>
    <property type="project" value="PomBase"/>
</dbReference>
<dbReference type="GO" id="GO:0016020">
    <property type="term" value="C:membrane"/>
    <property type="evidence" value="ECO:0000318"/>
    <property type="project" value="GO_Central"/>
</dbReference>
<dbReference type="GO" id="GO:0005774">
    <property type="term" value="C:vacuolar membrane"/>
    <property type="evidence" value="ECO:0007669"/>
    <property type="project" value="UniProtKB-SubCell"/>
</dbReference>
<dbReference type="GO" id="GO:0008559">
    <property type="term" value="F:ABC-type xenobiotic transporter activity"/>
    <property type="evidence" value="ECO:0007669"/>
    <property type="project" value="UniProtKB-EC"/>
</dbReference>
<dbReference type="GO" id="GO:0005524">
    <property type="term" value="F:ATP binding"/>
    <property type="evidence" value="ECO:0007669"/>
    <property type="project" value="UniProtKB-KW"/>
</dbReference>
<dbReference type="GO" id="GO:0016887">
    <property type="term" value="F:ATP hydrolysis activity"/>
    <property type="evidence" value="ECO:0007669"/>
    <property type="project" value="InterPro"/>
</dbReference>
<dbReference type="GO" id="GO:0042626">
    <property type="term" value="F:ATPase-coupled transmembrane transporter activity"/>
    <property type="evidence" value="ECO:0000318"/>
    <property type="project" value="GO_Central"/>
</dbReference>
<dbReference type="GO" id="GO:0071996">
    <property type="term" value="P:glutathione transmembrane import into vacuole"/>
    <property type="evidence" value="ECO:0000315"/>
    <property type="project" value="PomBase"/>
</dbReference>
<dbReference type="GO" id="GO:0036246">
    <property type="term" value="P:phytochelatin 2 import into vacuole"/>
    <property type="evidence" value="ECO:0000315"/>
    <property type="project" value="PomBase"/>
</dbReference>
<dbReference type="GO" id="GO:0009636">
    <property type="term" value="P:response to toxic substance"/>
    <property type="evidence" value="ECO:0007669"/>
    <property type="project" value="UniProtKB-KW"/>
</dbReference>
<dbReference type="GO" id="GO:0055085">
    <property type="term" value="P:transmembrane transport"/>
    <property type="evidence" value="ECO:0000318"/>
    <property type="project" value="GO_Central"/>
</dbReference>
<dbReference type="CDD" id="cd18596">
    <property type="entry name" value="ABC_6TM_VMR1_D1_like"/>
    <property type="match status" value="1"/>
</dbReference>
<dbReference type="CDD" id="cd18604">
    <property type="entry name" value="ABC_6TM_VMR1_D2_like"/>
    <property type="match status" value="1"/>
</dbReference>
<dbReference type="CDD" id="cd03250">
    <property type="entry name" value="ABCC_MRP_domain1"/>
    <property type="match status" value="1"/>
</dbReference>
<dbReference type="CDD" id="cd03244">
    <property type="entry name" value="ABCC_MRP_domain2"/>
    <property type="match status" value="1"/>
</dbReference>
<dbReference type="FunFam" id="3.40.50.300:FF:000838">
    <property type="entry name" value="ABC multidrug transporter (Eurofung)"/>
    <property type="match status" value="1"/>
</dbReference>
<dbReference type="FunFam" id="1.20.1560.10:FF:000013">
    <property type="entry name" value="ABC transporter C family member 2"/>
    <property type="match status" value="1"/>
</dbReference>
<dbReference type="FunFam" id="1.20.1560.10:FF:000220">
    <property type="entry name" value="Unplaced genomic scaffold supercont2.6, whole genome shotgun sequence"/>
    <property type="match status" value="1"/>
</dbReference>
<dbReference type="Gene3D" id="1.20.1560.10">
    <property type="entry name" value="ABC transporter type 1, transmembrane domain"/>
    <property type="match status" value="2"/>
</dbReference>
<dbReference type="Gene3D" id="3.40.50.300">
    <property type="entry name" value="P-loop containing nucleotide triphosphate hydrolases"/>
    <property type="match status" value="2"/>
</dbReference>
<dbReference type="InterPro" id="IPR003593">
    <property type="entry name" value="AAA+_ATPase"/>
</dbReference>
<dbReference type="InterPro" id="IPR011527">
    <property type="entry name" value="ABC1_TM_dom"/>
</dbReference>
<dbReference type="InterPro" id="IPR036640">
    <property type="entry name" value="ABC1_TM_sf"/>
</dbReference>
<dbReference type="InterPro" id="IPR003439">
    <property type="entry name" value="ABC_transporter-like_ATP-bd"/>
</dbReference>
<dbReference type="InterPro" id="IPR017871">
    <property type="entry name" value="ABC_transporter-like_CS"/>
</dbReference>
<dbReference type="InterPro" id="IPR050173">
    <property type="entry name" value="ABC_transporter_C-like"/>
</dbReference>
<dbReference type="InterPro" id="IPR027417">
    <property type="entry name" value="P-loop_NTPase"/>
</dbReference>
<dbReference type="PANTHER" id="PTHR24223">
    <property type="entry name" value="ATP-BINDING CASSETTE SUB-FAMILY C"/>
    <property type="match status" value="1"/>
</dbReference>
<dbReference type="PANTHER" id="PTHR24223:SF356">
    <property type="entry name" value="ATP-BINDING CASSETTE TRANSPORTER ABC4"/>
    <property type="match status" value="1"/>
</dbReference>
<dbReference type="Pfam" id="PF00664">
    <property type="entry name" value="ABC_membrane"/>
    <property type="match status" value="2"/>
</dbReference>
<dbReference type="Pfam" id="PF00005">
    <property type="entry name" value="ABC_tran"/>
    <property type="match status" value="2"/>
</dbReference>
<dbReference type="SMART" id="SM00382">
    <property type="entry name" value="AAA"/>
    <property type="match status" value="2"/>
</dbReference>
<dbReference type="SUPFAM" id="SSF90123">
    <property type="entry name" value="ABC transporter transmembrane region"/>
    <property type="match status" value="2"/>
</dbReference>
<dbReference type="SUPFAM" id="SSF52540">
    <property type="entry name" value="P-loop containing nucleoside triphosphate hydrolases"/>
    <property type="match status" value="2"/>
</dbReference>
<dbReference type="PROSITE" id="PS50929">
    <property type="entry name" value="ABC_TM1F"/>
    <property type="match status" value="2"/>
</dbReference>
<dbReference type="PROSITE" id="PS00211">
    <property type="entry name" value="ABC_TRANSPORTER_1"/>
    <property type="match status" value="2"/>
</dbReference>
<dbReference type="PROSITE" id="PS50893">
    <property type="entry name" value="ABC_TRANSPORTER_2"/>
    <property type="match status" value="2"/>
</dbReference>